<evidence type="ECO:0000256" key="1">
    <source>
        <dbReference type="SAM" id="MobiDB-lite"/>
    </source>
</evidence>
<evidence type="ECO:0000305" key="2"/>
<accession>P21117</accession>
<accession>Q80HV1</accession>
<protein>
    <recommendedName>
        <fullName>7 kDa A-type inclusion protein</fullName>
    </recommendedName>
</protein>
<organismHost>
    <name type="scientific">Bos taurus</name>
    <name type="common">Bovine</name>
    <dbReference type="NCBI Taxonomy" id="9913"/>
</organismHost>
<proteinExistence type="predicted"/>
<dbReference type="EMBL" id="M37415">
    <property type="protein sequence ID" value="AAA72883.1"/>
    <property type="status" value="ALT_INIT"/>
    <property type="molecule type" value="Genomic_DNA"/>
</dbReference>
<dbReference type="EMBL" id="AY243312">
    <property type="protein sequence ID" value="AAO89424.1"/>
    <property type="molecule type" value="Genomic_DNA"/>
</dbReference>
<dbReference type="RefSeq" id="YP_233027.1">
    <property type="nucleotide sequence ID" value="NC_006998.1"/>
</dbReference>
<dbReference type="SMR" id="P21117"/>
<dbReference type="DNASU" id="3707675"/>
<dbReference type="GeneID" id="3707675"/>
<dbReference type="KEGG" id="vg:3707675"/>
<dbReference type="Proteomes" id="UP000000344">
    <property type="component" value="Genome"/>
</dbReference>
<feature type="chain" id="PRO_0000099276" description="7 kDa A-type inclusion protein">
    <location>
        <begin position="1"/>
        <end position="65"/>
    </location>
</feature>
<feature type="region of interest" description="Disordered" evidence="1">
    <location>
        <begin position="1"/>
        <end position="32"/>
    </location>
</feature>
<feature type="compositionally biased region" description="Polar residues" evidence="1">
    <location>
        <begin position="1"/>
        <end position="20"/>
    </location>
</feature>
<gene>
    <name type="ordered locus">VACWR145</name>
</gene>
<keyword id="KW-1185">Reference proteome</keyword>
<name>ATI3_VACCW</name>
<organism>
    <name type="scientific">Vaccinia virus (strain Western Reserve)</name>
    <name type="common">VACV</name>
    <name type="synonym">Vaccinia virus (strain WR)</name>
    <dbReference type="NCBI Taxonomy" id="10254"/>
    <lineage>
        <taxon>Viruses</taxon>
        <taxon>Varidnaviria</taxon>
        <taxon>Bamfordvirae</taxon>
        <taxon>Nucleocytoviricota</taxon>
        <taxon>Pokkesviricetes</taxon>
        <taxon>Chitovirales</taxon>
        <taxon>Poxviridae</taxon>
        <taxon>Chordopoxvirinae</taxon>
        <taxon>Orthopoxvirus</taxon>
        <taxon>Vaccinia virus</taxon>
    </lineage>
</organism>
<reference key="1">
    <citation type="journal article" date="1991" name="Virology">
        <title>Identification, sequence, and expression of the gene encoding the second-largest subunit of the vaccinia virus DNA-dependent RNA polymerase.</title>
        <authorList>
            <person name="Amegadzie B.Y."/>
            <person name="Holmes M.H."/>
            <person name="Cole N.B."/>
            <person name="Jones E.V."/>
            <person name="Earl P.L."/>
            <person name="Moss B."/>
        </authorList>
    </citation>
    <scope>NUCLEOTIDE SEQUENCE [GENOMIC DNA]</scope>
</reference>
<reference key="2">
    <citation type="submission" date="2003-02" db="EMBL/GenBank/DDBJ databases">
        <title>Sequencing of the coding region of Vaccinia-WR to an average 9-fold redundancy and an error rate of 0.16/10kb.</title>
        <authorList>
            <person name="Esposito J.J."/>
            <person name="Frace A.M."/>
            <person name="Sammons S.A."/>
            <person name="Olsen-Rasmussen M."/>
            <person name="Osborne J."/>
            <person name="Wohlhueter R."/>
        </authorList>
    </citation>
    <scope>NUCLEOTIDE SEQUENCE [LARGE SCALE GENOMIC DNA]</scope>
</reference>
<reference key="3">
    <citation type="journal article" date="2012" name="J. Virol.">
        <title>Formation of orthopoxvirus cytoplasmic a-type inclusion bodies and embedding of virions are dynamic processes requiring microtubules.</title>
        <authorList>
            <person name="Howard A.R."/>
            <person name="Moss B."/>
        </authorList>
    </citation>
    <scope>FUNCTION</scope>
</reference>
<sequence>MSNQNIPQLSEYQTSVSQVAVTPPPKPKTPQIFEYQTSDSIVNNPRPFYNSDLEFDDIDMYLLPN</sequence>
<comment type="sequence caution" evidence="2">
    <conflict type="erroneous initiation">
        <sequence resource="EMBL-CDS" id="AAA72883"/>
    </conflict>
    <text>Extended N-terminus.</text>
</comment>